<evidence type="ECO:0000250" key="1">
    <source>
        <dbReference type="UniProtKB" id="P31080"/>
    </source>
</evidence>
<evidence type="ECO:0000269" key="2">
    <source>
    </source>
</evidence>
<evidence type="ECO:0000303" key="3">
    <source>
    </source>
</evidence>
<evidence type="ECO:0000305" key="4"/>
<evidence type="ECO:0000305" key="5">
    <source>
    </source>
</evidence>
<comment type="function">
    <text evidence="1 2">Binds the consensus sequence 5'-TGTTC-N(4)-GAACA-3'; some genes have a tandem consensus sequence, at high concentrations their binding is cooperative (PubMed:27489856). Binds to the promoters of a number of genes, including dinB, imuA, lexA, recA, recQ, splB and uvrA (PubMed:27489856). Represses a number of genes involved in the response to DNA damage (SOS response) (By similarity). In the presence of single-stranded DNA, RecA interacts with LexA causing an autocatalytic cleavage which disrupts the DNA-binding part of LexA, leading to derepression of the SOS regulon and eventually DNA repair (By similarity).</text>
</comment>
<comment type="catalytic activity">
    <reaction evidence="1">
        <text>Hydrolysis of Ala-|-Gly bond in repressor LexA.</text>
        <dbReference type="EC" id="3.4.21.88"/>
    </reaction>
</comment>
<comment type="subunit">
    <text evidence="5">Homodimer.</text>
</comment>
<comment type="similarity">
    <text evidence="4">Belongs to the peptidase S24 family.</text>
</comment>
<feature type="chain" id="PRO_0000438702" description="LexA repressor">
    <location>
        <begin position="1"/>
        <end position="202"/>
    </location>
</feature>
<feature type="active site" description="For autocatalytic cleavage activity" evidence="1">
    <location>
        <position position="123"/>
    </location>
</feature>
<feature type="active site" description="For autocatalytic cleavage activity" evidence="1">
    <location>
        <position position="159"/>
    </location>
</feature>
<feature type="site" description="Cleavage; by autolysis" evidence="1">
    <location>
        <begin position="85"/>
        <end position="86"/>
    </location>
</feature>
<proteinExistence type="evidence at protein level"/>
<organism>
    <name type="scientific">Verrucomicrobium spinosum (strain ATCC 43997 / DSM 4136 / JCM 18804 / IFAM 1439)</name>
    <dbReference type="NCBI Taxonomy" id="240016"/>
    <lineage>
        <taxon>Bacteria</taxon>
        <taxon>Pseudomonadati</taxon>
        <taxon>Verrucomicrobiota</taxon>
        <taxon>Verrucomicrobiia</taxon>
        <taxon>Verrucomicrobiales</taxon>
        <taxon>Verrucomicrobiaceae</taxon>
        <taxon>Verrucomicrobium</taxon>
    </lineage>
</organism>
<gene>
    <name evidence="3" type="primary">lexA</name>
    <name evidence="3" type="ORF">VSP_04780</name>
</gene>
<dbReference type="EC" id="3.4.21.88"/>
<dbReference type="EMBL" id="ABIZ01000001">
    <property type="status" value="NOT_ANNOTATED_CDS"/>
    <property type="molecule type" value="Genomic_DNA"/>
</dbReference>
<dbReference type="RefSeq" id="WP_009959117.1">
    <property type="nucleotide sequence ID" value="NZ_ABIZ01000001.1"/>
</dbReference>
<dbReference type="SMR" id="P0DOW5"/>
<dbReference type="GO" id="GO:0003677">
    <property type="term" value="F:DNA binding"/>
    <property type="evidence" value="ECO:0007669"/>
    <property type="project" value="UniProtKB-KW"/>
</dbReference>
<dbReference type="GO" id="GO:0004252">
    <property type="term" value="F:serine-type endopeptidase activity"/>
    <property type="evidence" value="ECO:0007669"/>
    <property type="project" value="UniProtKB-EC"/>
</dbReference>
<dbReference type="GO" id="GO:0006281">
    <property type="term" value="P:DNA repair"/>
    <property type="evidence" value="ECO:0007669"/>
    <property type="project" value="UniProtKB-KW"/>
</dbReference>
<dbReference type="GO" id="GO:0006260">
    <property type="term" value="P:DNA replication"/>
    <property type="evidence" value="ECO:0007669"/>
    <property type="project" value="UniProtKB-KW"/>
</dbReference>
<dbReference type="GO" id="GO:0045892">
    <property type="term" value="P:negative regulation of DNA-templated transcription"/>
    <property type="evidence" value="ECO:0007669"/>
    <property type="project" value="InterPro"/>
</dbReference>
<dbReference type="GO" id="GO:0006508">
    <property type="term" value="P:proteolysis"/>
    <property type="evidence" value="ECO:0007669"/>
    <property type="project" value="InterPro"/>
</dbReference>
<dbReference type="GO" id="GO:0009432">
    <property type="term" value="P:SOS response"/>
    <property type="evidence" value="ECO:0007669"/>
    <property type="project" value="UniProtKB-KW"/>
</dbReference>
<dbReference type="CDD" id="cd06529">
    <property type="entry name" value="S24_LexA-like"/>
    <property type="match status" value="1"/>
</dbReference>
<dbReference type="Gene3D" id="2.10.109.10">
    <property type="entry name" value="Umud Fragment, subunit A"/>
    <property type="match status" value="1"/>
</dbReference>
<dbReference type="Gene3D" id="1.10.10.10">
    <property type="entry name" value="Winged helix-like DNA-binding domain superfamily/Winged helix DNA-binding domain"/>
    <property type="match status" value="1"/>
</dbReference>
<dbReference type="InterPro" id="IPR006200">
    <property type="entry name" value="LexA"/>
</dbReference>
<dbReference type="InterPro" id="IPR039418">
    <property type="entry name" value="LexA-like"/>
</dbReference>
<dbReference type="InterPro" id="IPR036286">
    <property type="entry name" value="LexA/Signal_pep-like_sf"/>
</dbReference>
<dbReference type="InterPro" id="IPR006199">
    <property type="entry name" value="LexA_DNA-bd_dom"/>
</dbReference>
<dbReference type="InterPro" id="IPR050077">
    <property type="entry name" value="LexA_repressor"/>
</dbReference>
<dbReference type="InterPro" id="IPR006197">
    <property type="entry name" value="Peptidase_S24_LexA"/>
</dbReference>
<dbReference type="InterPro" id="IPR015927">
    <property type="entry name" value="Peptidase_S24_S26A/B/C"/>
</dbReference>
<dbReference type="InterPro" id="IPR036388">
    <property type="entry name" value="WH-like_DNA-bd_sf"/>
</dbReference>
<dbReference type="InterPro" id="IPR036390">
    <property type="entry name" value="WH_DNA-bd_sf"/>
</dbReference>
<dbReference type="NCBIfam" id="TIGR00498">
    <property type="entry name" value="lexA"/>
    <property type="match status" value="1"/>
</dbReference>
<dbReference type="PANTHER" id="PTHR33516">
    <property type="entry name" value="LEXA REPRESSOR"/>
    <property type="match status" value="1"/>
</dbReference>
<dbReference type="PANTHER" id="PTHR33516:SF2">
    <property type="entry name" value="LEXA REPRESSOR-RELATED"/>
    <property type="match status" value="1"/>
</dbReference>
<dbReference type="Pfam" id="PF01726">
    <property type="entry name" value="LexA_DNA_bind"/>
    <property type="match status" value="1"/>
</dbReference>
<dbReference type="Pfam" id="PF00717">
    <property type="entry name" value="Peptidase_S24"/>
    <property type="match status" value="1"/>
</dbReference>
<dbReference type="PRINTS" id="PR00726">
    <property type="entry name" value="LEXASERPTASE"/>
</dbReference>
<dbReference type="SUPFAM" id="SSF51306">
    <property type="entry name" value="LexA/Signal peptidase"/>
    <property type="match status" value="1"/>
</dbReference>
<dbReference type="SUPFAM" id="SSF46785">
    <property type="entry name" value="Winged helix' DNA-binding domain"/>
    <property type="match status" value="1"/>
</dbReference>
<reference key="1">
    <citation type="submission" date="2007-12" db="EMBL/GenBank/DDBJ databases">
        <authorList>
            <person name="Ward N.L."/>
            <person name="Wu M."/>
            <person name="Brinkac L.M."/>
            <person name="Daugherty S.C."/>
            <person name="DeBoy R.T."/>
            <person name="Dodson R.J."/>
            <person name="Durkin A.S."/>
            <person name="Gwinn-Giglio M."/>
            <person name="Kothari S.P."/>
            <person name="Madupu R."/>
            <person name="Nelson W.C."/>
            <person name="Rosovitz M.J."/>
            <person name="Shrivastava S."/>
            <person name="Sullivan S."/>
            <person name="Haft D.H."/>
            <person name="Selengut J.D."/>
            <person name="Creasy T."/>
            <person name="Zafar N."/>
            <person name="Davidsen T.M."/>
            <person name="Yang Q."/>
            <person name="Ganapaty A."/>
            <person name="Dimitrov G."/>
            <person name="Sosa J."/>
            <person name="Toms B."/>
            <person name="Khouri H."/>
        </authorList>
    </citation>
    <scope>NUCLEOTIDE SEQUENCE [LARGE SCALE GENOMIC DNA]</scope>
    <source>
        <strain>ATCC 43997 / DSM 4136 / JCM 18804 / IFAM 1439</strain>
    </source>
</reference>
<reference key="2">
    <citation type="journal article" date="2016" name="Front. Mol. Biosci.">
        <title>The Verrucomicrobia LexA-binding motif: insights into the evolutionary dynamics of the SOS response.</title>
        <authorList>
            <person name="Erill I."/>
            <person name="Campoy S."/>
            <person name="Kilic S."/>
            <person name="Barbe J."/>
        </authorList>
    </citation>
    <scope>FUNCTION</scope>
    <scope>SUBUNIT</scope>
    <scope>DNA-BINDING</scope>
    <source>
        <strain>ATCC 43997 / DSM 4136 / JCM 18804 / IFAM 1439</strain>
    </source>
</reference>
<sequence length="202" mass="22718">MLTERQQELLDFLRVYQRQQGVMPSTRDIQLHFGFASQTAAMSHLKALERKGVIRRLAGKARAVVFPEVMERETVDIPIFGLIPAGFTADNPEHSDGNLTLDLRTMGLSPRSKPFALKVRGDSMTGAHIIQGDYVILEQRDPRPKDIVAALMDGETTLKRYLVDNGQPFLRAENPSYPDLIPARELMIQGVMVGLFRPYNGR</sequence>
<protein>
    <recommendedName>
        <fullName evidence="3">LexA repressor</fullName>
        <ecNumber>3.4.21.88</ecNumber>
    </recommendedName>
</protein>
<name>LEXA_VERSI</name>
<keyword id="KW-0068">Autocatalytic cleavage</keyword>
<keyword id="KW-0227">DNA damage</keyword>
<keyword id="KW-0234">DNA repair</keyword>
<keyword id="KW-0235">DNA replication</keyword>
<keyword id="KW-0238">DNA-binding</keyword>
<keyword id="KW-0378">Hydrolase</keyword>
<keyword id="KW-0678">Repressor</keyword>
<keyword id="KW-0742">SOS response</keyword>
<keyword id="KW-0804">Transcription</keyword>
<keyword id="KW-0805">Transcription regulation</keyword>
<accession>P0DOW5</accession>